<keyword id="KW-0067">ATP-binding</keyword>
<keyword id="KW-0418">Kinase</keyword>
<keyword id="KW-0547">Nucleotide-binding</keyword>
<keyword id="KW-0597">Phosphoprotein</keyword>
<keyword id="KW-1185">Reference proteome</keyword>
<keyword id="KW-0808">Transferase</keyword>
<sequence>MSFVIWITGPSGAGKTTLANALYKKLESMGYRVELLDGDGVRRKLYPNLGFSEEERWMHNRVVVEMARRLSRNGIITIVSVVSPYRAWREYARKEIEKFVEVYPRCPLEVRMKRDPKGLYSKALRGEIKGLTGLDGEYEEPENPEVVVDTDKNDR</sequence>
<dbReference type="EC" id="2.7.1.25"/>
<dbReference type="EMBL" id="AE000782">
    <property type="protein sequence ID" value="AAB90945.1"/>
    <property type="molecule type" value="Genomic_DNA"/>
</dbReference>
<dbReference type="PIR" id="H69285">
    <property type="entry name" value="H69285"/>
</dbReference>
<dbReference type="SMR" id="O29953"/>
<dbReference type="STRING" id="224325.AF_0288"/>
<dbReference type="PaxDb" id="224325-AF_0288"/>
<dbReference type="EnsemblBacteria" id="AAB90945">
    <property type="protein sequence ID" value="AAB90945"/>
    <property type="gene ID" value="AF_0288"/>
</dbReference>
<dbReference type="KEGG" id="afu:AF_0288"/>
<dbReference type="eggNOG" id="arCOG01040">
    <property type="taxonomic scope" value="Archaea"/>
</dbReference>
<dbReference type="HOGENOM" id="CLU_046932_2_3_2"/>
<dbReference type="OrthoDB" id="28808at2157"/>
<dbReference type="PhylomeDB" id="O29953"/>
<dbReference type="UniPathway" id="UPA00140">
    <property type="reaction ID" value="UER00205"/>
</dbReference>
<dbReference type="Proteomes" id="UP000002199">
    <property type="component" value="Chromosome"/>
</dbReference>
<dbReference type="GO" id="GO:0005737">
    <property type="term" value="C:cytoplasm"/>
    <property type="evidence" value="ECO:0007669"/>
    <property type="project" value="TreeGrafter"/>
</dbReference>
<dbReference type="GO" id="GO:0004020">
    <property type="term" value="F:adenylylsulfate kinase activity"/>
    <property type="evidence" value="ECO:0007669"/>
    <property type="project" value="UniProtKB-UniRule"/>
</dbReference>
<dbReference type="GO" id="GO:0005524">
    <property type="term" value="F:ATP binding"/>
    <property type="evidence" value="ECO:0007669"/>
    <property type="project" value="UniProtKB-UniRule"/>
</dbReference>
<dbReference type="GO" id="GO:0004781">
    <property type="term" value="F:sulfate adenylyltransferase (ATP) activity"/>
    <property type="evidence" value="ECO:0007669"/>
    <property type="project" value="TreeGrafter"/>
</dbReference>
<dbReference type="GO" id="GO:0070814">
    <property type="term" value="P:hydrogen sulfide biosynthetic process"/>
    <property type="evidence" value="ECO:0007669"/>
    <property type="project" value="UniProtKB-UniRule"/>
</dbReference>
<dbReference type="GO" id="GO:0010134">
    <property type="term" value="P:sulfate assimilation via adenylyl sulfate reduction"/>
    <property type="evidence" value="ECO:0007669"/>
    <property type="project" value="TreeGrafter"/>
</dbReference>
<dbReference type="GO" id="GO:0019379">
    <property type="term" value="P:sulfate assimilation, phosphoadenylyl sulfate reduction by phosphoadenylyl-sulfate reductase (thioredoxin)"/>
    <property type="evidence" value="ECO:0007669"/>
    <property type="project" value="TreeGrafter"/>
</dbReference>
<dbReference type="CDD" id="cd02027">
    <property type="entry name" value="APSK"/>
    <property type="match status" value="1"/>
</dbReference>
<dbReference type="Gene3D" id="3.40.50.300">
    <property type="entry name" value="P-loop containing nucleotide triphosphate hydrolases"/>
    <property type="match status" value="1"/>
</dbReference>
<dbReference type="HAMAP" id="MF_00065">
    <property type="entry name" value="Adenylyl_sulf_kinase"/>
    <property type="match status" value="1"/>
</dbReference>
<dbReference type="InterPro" id="IPR002891">
    <property type="entry name" value="APS_kinase"/>
</dbReference>
<dbReference type="InterPro" id="IPR027417">
    <property type="entry name" value="P-loop_NTPase"/>
</dbReference>
<dbReference type="InterPro" id="IPR050512">
    <property type="entry name" value="Sulf_AdTrans/APS_kinase"/>
</dbReference>
<dbReference type="NCBIfam" id="TIGR00455">
    <property type="entry name" value="apsK"/>
    <property type="match status" value="1"/>
</dbReference>
<dbReference type="NCBIfam" id="NF004041">
    <property type="entry name" value="PRK05541.1"/>
    <property type="match status" value="1"/>
</dbReference>
<dbReference type="PANTHER" id="PTHR42700">
    <property type="entry name" value="SULFATE ADENYLYLTRANSFERASE"/>
    <property type="match status" value="1"/>
</dbReference>
<dbReference type="PANTHER" id="PTHR42700:SF1">
    <property type="entry name" value="SULFATE ADENYLYLTRANSFERASE"/>
    <property type="match status" value="1"/>
</dbReference>
<dbReference type="Pfam" id="PF01583">
    <property type="entry name" value="APS_kinase"/>
    <property type="match status" value="1"/>
</dbReference>
<dbReference type="SUPFAM" id="SSF52540">
    <property type="entry name" value="P-loop containing nucleoside triphosphate hydrolases"/>
    <property type="match status" value="1"/>
</dbReference>
<reference key="1">
    <citation type="journal article" date="1997" name="Nature">
        <title>The complete genome sequence of the hyperthermophilic, sulphate-reducing archaeon Archaeoglobus fulgidus.</title>
        <authorList>
            <person name="Klenk H.-P."/>
            <person name="Clayton R.A."/>
            <person name="Tomb J.-F."/>
            <person name="White O."/>
            <person name="Nelson K.E."/>
            <person name="Ketchum K.A."/>
            <person name="Dodson R.J."/>
            <person name="Gwinn M.L."/>
            <person name="Hickey E.K."/>
            <person name="Peterson J.D."/>
            <person name="Richardson D.L."/>
            <person name="Kerlavage A.R."/>
            <person name="Graham D.E."/>
            <person name="Kyrpides N.C."/>
            <person name="Fleischmann R.D."/>
            <person name="Quackenbush J."/>
            <person name="Lee N.H."/>
            <person name="Sutton G.G."/>
            <person name="Gill S.R."/>
            <person name="Kirkness E.F."/>
            <person name="Dougherty B.A."/>
            <person name="McKenney K."/>
            <person name="Adams M.D."/>
            <person name="Loftus B.J."/>
            <person name="Peterson S.N."/>
            <person name="Reich C.I."/>
            <person name="McNeil L.K."/>
            <person name="Badger J.H."/>
            <person name="Glodek A."/>
            <person name="Zhou L."/>
            <person name="Overbeek R."/>
            <person name="Gocayne J.D."/>
            <person name="Weidman J.F."/>
            <person name="McDonald L.A."/>
            <person name="Utterback T.R."/>
            <person name="Cotton M.D."/>
            <person name="Spriggs T."/>
            <person name="Artiach P."/>
            <person name="Kaine B.P."/>
            <person name="Sykes S.M."/>
            <person name="Sadow P.W."/>
            <person name="D'Andrea K.P."/>
            <person name="Bowman C."/>
            <person name="Fujii C."/>
            <person name="Garland S.A."/>
            <person name="Mason T.M."/>
            <person name="Olsen G.J."/>
            <person name="Fraser C.M."/>
            <person name="Smith H.O."/>
            <person name="Woese C.R."/>
            <person name="Venter J.C."/>
        </authorList>
    </citation>
    <scope>NUCLEOTIDE SEQUENCE [LARGE SCALE GENOMIC DNA]</scope>
    <source>
        <strain>ATCC 49558 / DSM 4304 / JCM 9628 / NBRC 100126 / VC-16</strain>
    </source>
</reference>
<protein>
    <recommendedName>
        <fullName>Probable adenylyl-sulfate kinase</fullName>
        <ecNumber>2.7.1.25</ecNumber>
    </recommendedName>
    <alternativeName>
        <fullName>APS kinase</fullName>
    </alternativeName>
    <alternativeName>
        <fullName>ATP adenosine-5'-phosphosulfate 3'-phosphotransferase</fullName>
    </alternativeName>
    <alternativeName>
        <fullName>Adenosine-5'-phosphosulfate kinase</fullName>
    </alternativeName>
</protein>
<comment type="function">
    <text>Catalyzes the synthesis of activated sulfate.</text>
</comment>
<comment type="catalytic activity">
    <reaction>
        <text>adenosine 5'-phosphosulfate + ATP = 3'-phosphoadenylyl sulfate + ADP + H(+)</text>
        <dbReference type="Rhea" id="RHEA:24152"/>
        <dbReference type="ChEBI" id="CHEBI:15378"/>
        <dbReference type="ChEBI" id="CHEBI:30616"/>
        <dbReference type="ChEBI" id="CHEBI:58243"/>
        <dbReference type="ChEBI" id="CHEBI:58339"/>
        <dbReference type="ChEBI" id="CHEBI:456216"/>
        <dbReference type="EC" id="2.7.1.25"/>
    </reaction>
</comment>
<comment type="pathway">
    <text>Sulfur metabolism; hydrogen sulfide biosynthesis; sulfite from sulfate: step 2/3.</text>
</comment>
<comment type="similarity">
    <text evidence="3">Belongs to the APS kinase family.</text>
</comment>
<feature type="chain" id="PRO_0000105929" description="Probable adenylyl-sulfate kinase">
    <location>
        <begin position="1"/>
        <end position="155"/>
    </location>
</feature>
<feature type="region of interest" description="Disordered" evidence="2">
    <location>
        <begin position="134"/>
        <end position="155"/>
    </location>
</feature>
<feature type="active site" description="Phosphoserine intermediate" evidence="1">
    <location>
        <position position="83"/>
    </location>
</feature>
<feature type="binding site" evidence="1">
    <location>
        <begin position="9"/>
        <end position="16"/>
    </location>
    <ligand>
        <name>ATP</name>
        <dbReference type="ChEBI" id="CHEBI:30616"/>
    </ligand>
</feature>
<proteinExistence type="inferred from homology"/>
<evidence type="ECO:0000250" key="1"/>
<evidence type="ECO:0000256" key="2">
    <source>
        <dbReference type="SAM" id="MobiDB-lite"/>
    </source>
</evidence>
<evidence type="ECO:0000305" key="3"/>
<accession>O29953</accession>
<organism>
    <name type="scientific">Archaeoglobus fulgidus (strain ATCC 49558 / DSM 4304 / JCM 9628 / NBRC 100126 / VC-16)</name>
    <dbReference type="NCBI Taxonomy" id="224325"/>
    <lineage>
        <taxon>Archaea</taxon>
        <taxon>Methanobacteriati</taxon>
        <taxon>Methanobacteriota</taxon>
        <taxon>Archaeoglobi</taxon>
        <taxon>Archaeoglobales</taxon>
        <taxon>Archaeoglobaceae</taxon>
        <taxon>Archaeoglobus</taxon>
    </lineage>
</organism>
<gene>
    <name type="primary">cysC</name>
    <name type="ordered locus">AF_0288</name>
</gene>
<name>CYSC_ARCFU</name>